<feature type="chain" id="PRO_0000229324" description="ATP phosphoribosyltransferase">
    <location>
        <begin position="1"/>
        <end position="212"/>
    </location>
</feature>
<organism>
    <name type="scientific">Prochlorococcus marinus (strain MIT 9312)</name>
    <dbReference type="NCBI Taxonomy" id="74546"/>
    <lineage>
        <taxon>Bacteria</taxon>
        <taxon>Bacillati</taxon>
        <taxon>Cyanobacteriota</taxon>
        <taxon>Cyanophyceae</taxon>
        <taxon>Synechococcales</taxon>
        <taxon>Prochlorococcaceae</taxon>
        <taxon>Prochlorococcus</taxon>
    </lineage>
</organism>
<protein>
    <recommendedName>
        <fullName evidence="1">ATP phosphoribosyltransferase</fullName>
        <shortName evidence="1">ATP-PRT</shortName>
        <shortName evidence="1">ATP-PRTase</shortName>
        <ecNumber evidence="1">2.4.2.17</ecNumber>
    </recommendedName>
</protein>
<evidence type="ECO:0000255" key="1">
    <source>
        <dbReference type="HAMAP-Rule" id="MF_01018"/>
    </source>
</evidence>
<proteinExistence type="inferred from homology"/>
<sequence length="212" mass="23094">MFTIALPKGALLEDSISIFKRAGLDFSDALEENNRSLTFESNCKRAKALLVRNGDVPVYVSYGQADLGIVGYDVLRESELKVAKLLDLGFGGCHMSLAVKKNSNYSKPTDLPANCKVASKFTKTARSYFDELNIPVEIVHLTGSVELGPITGMAEAIVDLVATGKTLQENGLIKIDDIFYSTARLIGNPLSIRLDDNHLRDTILSIESINAL</sequence>
<keyword id="KW-0028">Amino-acid biosynthesis</keyword>
<keyword id="KW-0067">ATP-binding</keyword>
<keyword id="KW-0963">Cytoplasm</keyword>
<keyword id="KW-0328">Glycosyltransferase</keyword>
<keyword id="KW-0368">Histidine biosynthesis</keyword>
<keyword id="KW-0547">Nucleotide-binding</keyword>
<keyword id="KW-0808">Transferase</keyword>
<reference key="1">
    <citation type="journal article" date="2006" name="Science">
        <title>Genomic islands and the ecology and evolution of Prochlorococcus.</title>
        <authorList>
            <person name="Coleman M.L."/>
            <person name="Sullivan M.B."/>
            <person name="Martiny A.C."/>
            <person name="Steglich C."/>
            <person name="Barry K."/>
            <person name="Delong E.F."/>
            <person name="Chisholm S.W."/>
        </authorList>
    </citation>
    <scope>NUCLEOTIDE SEQUENCE [LARGE SCALE GENOMIC DNA]</scope>
    <source>
        <strain>MIT 9312</strain>
    </source>
</reference>
<gene>
    <name evidence="1" type="primary">hisG</name>
    <name type="ordered locus">PMT9312_0560</name>
</gene>
<accession>Q31BX4</accession>
<comment type="function">
    <text evidence="1">Catalyzes the condensation of ATP and 5-phosphoribose 1-diphosphate to form N'-(5'-phosphoribosyl)-ATP (PR-ATP). Has a crucial role in the pathway because the rate of histidine biosynthesis seems to be controlled primarily by regulation of HisG enzymatic activity.</text>
</comment>
<comment type="catalytic activity">
    <reaction evidence="1">
        <text>1-(5-phospho-beta-D-ribosyl)-ATP + diphosphate = 5-phospho-alpha-D-ribose 1-diphosphate + ATP</text>
        <dbReference type="Rhea" id="RHEA:18473"/>
        <dbReference type="ChEBI" id="CHEBI:30616"/>
        <dbReference type="ChEBI" id="CHEBI:33019"/>
        <dbReference type="ChEBI" id="CHEBI:58017"/>
        <dbReference type="ChEBI" id="CHEBI:73183"/>
        <dbReference type="EC" id="2.4.2.17"/>
    </reaction>
</comment>
<comment type="pathway">
    <text evidence="1">Amino-acid biosynthesis; L-histidine biosynthesis; L-histidine from 5-phospho-alpha-D-ribose 1-diphosphate: step 1/9.</text>
</comment>
<comment type="subunit">
    <text evidence="1">Heteromultimer composed of HisG and HisZ subunits.</text>
</comment>
<comment type="subcellular location">
    <subcellularLocation>
        <location evidence="1">Cytoplasm</location>
    </subcellularLocation>
</comment>
<comment type="domain">
    <text>Lacks the C-terminal regulatory region which is replaced by HisZ.</text>
</comment>
<comment type="similarity">
    <text evidence="1">Belongs to the ATP phosphoribosyltransferase family. Short subfamily.</text>
</comment>
<dbReference type="EC" id="2.4.2.17" evidence="1"/>
<dbReference type="EMBL" id="CP000111">
    <property type="protein sequence ID" value="ABB49621.1"/>
    <property type="molecule type" value="Genomic_DNA"/>
</dbReference>
<dbReference type="RefSeq" id="WP_011376116.1">
    <property type="nucleotide sequence ID" value="NC_007577.1"/>
</dbReference>
<dbReference type="SMR" id="Q31BX4"/>
<dbReference type="STRING" id="74546.PMT9312_0560"/>
<dbReference type="KEGG" id="pmi:PMT9312_0560"/>
<dbReference type="eggNOG" id="COG0040">
    <property type="taxonomic scope" value="Bacteria"/>
</dbReference>
<dbReference type="HOGENOM" id="CLU_038115_2_0_3"/>
<dbReference type="OrthoDB" id="9801867at2"/>
<dbReference type="UniPathway" id="UPA00031">
    <property type="reaction ID" value="UER00006"/>
</dbReference>
<dbReference type="Proteomes" id="UP000002715">
    <property type="component" value="Chromosome"/>
</dbReference>
<dbReference type="GO" id="GO:0005737">
    <property type="term" value="C:cytoplasm"/>
    <property type="evidence" value="ECO:0007669"/>
    <property type="project" value="UniProtKB-SubCell"/>
</dbReference>
<dbReference type="GO" id="GO:0005524">
    <property type="term" value="F:ATP binding"/>
    <property type="evidence" value="ECO:0007669"/>
    <property type="project" value="UniProtKB-KW"/>
</dbReference>
<dbReference type="GO" id="GO:0003879">
    <property type="term" value="F:ATP phosphoribosyltransferase activity"/>
    <property type="evidence" value="ECO:0007669"/>
    <property type="project" value="UniProtKB-UniRule"/>
</dbReference>
<dbReference type="GO" id="GO:0000105">
    <property type="term" value="P:L-histidine biosynthetic process"/>
    <property type="evidence" value="ECO:0007669"/>
    <property type="project" value="UniProtKB-UniRule"/>
</dbReference>
<dbReference type="CDD" id="cd13595">
    <property type="entry name" value="PBP2_HisGs"/>
    <property type="match status" value="1"/>
</dbReference>
<dbReference type="FunFam" id="3.40.190.10:FF:000008">
    <property type="entry name" value="ATP phosphoribosyltransferase"/>
    <property type="match status" value="1"/>
</dbReference>
<dbReference type="Gene3D" id="3.40.190.10">
    <property type="entry name" value="Periplasmic binding protein-like II"/>
    <property type="match status" value="2"/>
</dbReference>
<dbReference type="HAMAP" id="MF_01018">
    <property type="entry name" value="HisG_Short"/>
    <property type="match status" value="1"/>
</dbReference>
<dbReference type="InterPro" id="IPR013820">
    <property type="entry name" value="ATP_PRibTrfase_cat"/>
</dbReference>
<dbReference type="InterPro" id="IPR018198">
    <property type="entry name" value="ATP_PRibTrfase_CS"/>
</dbReference>
<dbReference type="InterPro" id="IPR001348">
    <property type="entry name" value="ATP_PRibTrfase_HisG"/>
</dbReference>
<dbReference type="InterPro" id="IPR024893">
    <property type="entry name" value="ATP_PRibTrfase_HisG_short"/>
</dbReference>
<dbReference type="NCBIfam" id="TIGR00070">
    <property type="entry name" value="hisG"/>
    <property type="match status" value="1"/>
</dbReference>
<dbReference type="PANTHER" id="PTHR21403:SF8">
    <property type="entry name" value="ATP PHOSPHORIBOSYLTRANSFERASE"/>
    <property type="match status" value="1"/>
</dbReference>
<dbReference type="PANTHER" id="PTHR21403">
    <property type="entry name" value="ATP PHOSPHORIBOSYLTRANSFERASE ATP-PRTASE"/>
    <property type="match status" value="1"/>
</dbReference>
<dbReference type="Pfam" id="PF01634">
    <property type="entry name" value="HisG"/>
    <property type="match status" value="1"/>
</dbReference>
<dbReference type="SUPFAM" id="SSF53850">
    <property type="entry name" value="Periplasmic binding protein-like II"/>
    <property type="match status" value="1"/>
</dbReference>
<dbReference type="PROSITE" id="PS01316">
    <property type="entry name" value="ATP_P_PHORIBOSYLTR"/>
    <property type="match status" value="1"/>
</dbReference>
<name>HIS1_PROM9</name>